<comment type="function">
    <text evidence="1">Actin-binding component of the Arp2/3 complex, a multiprotein complex that mediates actin polymerization upon stimulation by nucleation-promoting factor (NPF). The Arp2/3 complex mediates the formation of branched actin networks in the cytoplasm, providing the force for cell motility. Seems to contact the mother actin filament. In addition to its role in the cytoplasmic cytoskeleton, the Arp2/3 complex also promotes actin polymerization in the nucleus, thereby regulating gene transcription and repair of damaged DNA. The Arp2/3 complex promotes homologous recombination (HR) repair in response to DNA damage by promoting nuclear actin polymerization, leading to drive motility of double-strand breaks (DSBs).</text>
</comment>
<comment type="subunit">
    <text evidence="1 2 3">Component of the Arp2/3 complex composed of ACTR2/ARP2, ACTR3/ARP3, ARPC1B/p41-ARC, ARPC2/p34-ARC, ARPC3/p21-ARC, ARPC4/p20-ARC and ARPC5/p16-ARC (By similarity). Interacts with SHANK3; the interaction probably mediates the association of SHANK3 with the Arp2/3 complex (PubMed:24153177). Interacts with DNAI3; this interaction reduces binding of the Arp2/3 complex to the VCA domain of nucleation promoting factors (By similarity).</text>
</comment>
<comment type="subcellular location">
    <subcellularLocation>
        <location evidence="1">Cytoplasm</location>
        <location evidence="1">Cytoskeleton</location>
    </subcellularLocation>
    <subcellularLocation>
        <location evidence="1">Cell projection</location>
    </subcellularLocation>
    <subcellularLocation>
        <location evidence="3">Synapse</location>
        <location evidence="3">Synaptosome</location>
    </subcellularLocation>
    <subcellularLocation>
        <location evidence="1">Nucleus</location>
    </subcellularLocation>
</comment>
<comment type="tissue specificity">
    <text evidence="3">Expressed in hippocampal neurons (at protein level).</text>
</comment>
<comment type="similarity">
    <text evidence="4">Belongs to the ARPC2 family.</text>
</comment>
<organism>
    <name type="scientific">Mus musculus</name>
    <name type="common">Mouse</name>
    <dbReference type="NCBI Taxonomy" id="10090"/>
    <lineage>
        <taxon>Eukaryota</taxon>
        <taxon>Metazoa</taxon>
        <taxon>Chordata</taxon>
        <taxon>Craniata</taxon>
        <taxon>Vertebrata</taxon>
        <taxon>Euteleostomi</taxon>
        <taxon>Mammalia</taxon>
        <taxon>Eutheria</taxon>
        <taxon>Euarchontoglires</taxon>
        <taxon>Glires</taxon>
        <taxon>Rodentia</taxon>
        <taxon>Myomorpha</taxon>
        <taxon>Muroidea</taxon>
        <taxon>Muridae</taxon>
        <taxon>Murinae</taxon>
        <taxon>Mus</taxon>
        <taxon>Mus</taxon>
    </lineage>
</organism>
<proteinExistence type="evidence at protein level"/>
<gene>
    <name type="primary">Arpc2</name>
</gene>
<sequence>MILLEVNNRIIEETLALKFENAAAGNKPEAVEVTFADFDGVLYHISNPNGDKTKVMVSISLKFYKELQAHGADELLKRVYGSFLVNPEPGYNVSLLYDLENLPASKDSIVHQAGMLKRNCFASVFEKYFQFQEEGKEGENRAVIHYRDDETMYVESKKDRVTVVFSTVFKDDDDVVIGKVFMQEFKEGRRASHTAPQVLFSHREPPLELKDTDAAVGDNIGYITFVLFPRHTNATARDNTINLIHTFRDYLHYHIKCSKAYIHTRMRAKTSDFLKVLNRARPDAEKKEMKTITGKTFSSR</sequence>
<keyword id="KW-0002">3D-structure</keyword>
<keyword id="KW-0007">Acetylation</keyword>
<keyword id="KW-0009">Actin-binding</keyword>
<keyword id="KW-0966">Cell projection</keyword>
<keyword id="KW-0963">Cytoplasm</keyword>
<keyword id="KW-0206">Cytoskeleton</keyword>
<keyword id="KW-0903">Direct protein sequencing</keyword>
<keyword id="KW-0539">Nucleus</keyword>
<keyword id="KW-1185">Reference proteome</keyword>
<keyword id="KW-0770">Synapse</keyword>
<keyword id="KW-0771">Synaptosome</keyword>
<reference key="1">
    <citation type="journal article" date="2005" name="Science">
        <title>The transcriptional landscape of the mammalian genome.</title>
        <authorList>
            <person name="Carninci P."/>
            <person name="Kasukawa T."/>
            <person name="Katayama S."/>
            <person name="Gough J."/>
            <person name="Frith M.C."/>
            <person name="Maeda N."/>
            <person name="Oyama R."/>
            <person name="Ravasi T."/>
            <person name="Lenhard B."/>
            <person name="Wells C."/>
            <person name="Kodzius R."/>
            <person name="Shimokawa K."/>
            <person name="Bajic V.B."/>
            <person name="Brenner S.E."/>
            <person name="Batalov S."/>
            <person name="Forrest A.R."/>
            <person name="Zavolan M."/>
            <person name="Davis M.J."/>
            <person name="Wilming L.G."/>
            <person name="Aidinis V."/>
            <person name="Allen J.E."/>
            <person name="Ambesi-Impiombato A."/>
            <person name="Apweiler R."/>
            <person name="Aturaliya R.N."/>
            <person name="Bailey T.L."/>
            <person name="Bansal M."/>
            <person name="Baxter L."/>
            <person name="Beisel K.W."/>
            <person name="Bersano T."/>
            <person name="Bono H."/>
            <person name="Chalk A.M."/>
            <person name="Chiu K.P."/>
            <person name="Choudhary V."/>
            <person name="Christoffels A."/>
            <person name="Clutterbuck D.R."/>
            <person name="Crowe M.L."/>
            <person name="Dalla E."/>
            <person name="Dalrymple B.P."/>
            <person name="de Bono B."/>
            <person name="Della Gatta G."/>
            <person name="di Bernardo D."/>
            <person name="Down T."/>
            <person name="Engstrom P."/>
            <person name="Fagiolini M."/>
            <person name="Faulkner G."/>
            <person name="Fletcher C.F."/>
            <person name="Fukushima T."/>
            <person name="Furuno M."/>
            <person name="Futaki S."/>
            <person name="Gariboldi M."/>
            <person name="Georgii-Hemming P."/>
            <person name="Gingeras T.R."/>
            <person name="Gojobori T."/>
            <person name="Green R.E."/>
            <person name="Gustincich S."/>
            <person name="Harbers M."/>
            <person name="Hayashi Y."/>
            <person name="Hensch T.K."/>
            <person name="Hirokawa N."/>
            <person name="Hill D."/>
            <person name="Huminiecki L."/>
            <person name="Iacono M."/>
            <person name="Ikeo K."/>
            <person name="Iwama A."/>
            <person name="Ishikawa T."/>
            <person name="Jakt M."/>
            <person name="Kanapin A."/>
            <person name="Katoh M."/>
            <person name="Kawasawa Y."/>
            <person name="Kelso J."/>
            <person name="Kitamura H."/>
            <person name="Kitano H."/>
            <person name="Kollias G."/>
            <person name="Krishnan S.P."/>
            <person name="Kruger A."/>
            <person name="Kummerfeld S.K."/>
            <person name="Kurochkin I.V."/>
            <person name="Lareau L.F."/>
            <person name="Lazarevic D."/>
            <person name="Lipovich L."/>
            <person name="Liu J."/>
            <person name="Liuni S."/>
            <person name="McWilliam S."/>
            <person name="Madan Babu M."/>
            <person name="Madera M."/>
            <person name="Marchionni L."/>
            <person name="Matsuda H."/>
            <person name="Matsuzawa S."/>
            <person name="Miki H."/>
            <person name="Mignone F."/>
            <person name="Miyake S."/>
            <person name="Morris K."/>
            <person name="Mottagui-Tabar S."/>
            <person name="Mulder N."/>
            <person name="Nakano N."/>
            <person name="Nakauchi H."/>
            <person name="Ng P."/>
            <person name="Nilsson R."/>
            <person name="Nishiguchi S."/>
            <person name="Nishikawa S."/>
            <person name="Nori F."/>
            <person name="Ohara O."/>
            <person name="Okazaki Y."/>
            <person name="Orlando V."/>
            <person name="Pang K.C."/>
            <person name="Pavan W.J."/>
            <person name="Pavesi G."/>
            <person name="Pesole G."/>
            <person name="Petrovsky N."/>
            <person name="Piazza S."/>
            <person name="Reed J."/>
            <person name="Reid J.F."/>
            <person name="Ring B.Z."/>
            <person name="Ringwald M."/>
            <person name="Rost B."/>
            <person name="Ruan Y."/>
            <person name="Salzberg S.L."/>
            <person name="Sandelin A."/>
            <person name="Schneider C."/>
            <person name="Schoenbach C."/>
            <person name="Sekiguchi K."/>
            <person name="Semple C.A."/>
            <person name="Seno S."/>
            <person name="Sessa L."/>
            <person name="Sheng Y."/>
            <person name="Shibata Y."/>
            <person name="Shimada H."/>
            <person name="Shimada K."/>
            <person name="Silva D."/>
            <person name="Sinclair B."/>
            <person name="Sperling S."/>
            <person name="Stupka E."/>
            <person name="Sugiura K."/>
            <person name="Sultana R."/>
            <person name="Takenaka Y."/>
            <person name="Taki K."/>
            <person name="Tammoja K."/>
            <person name="Tan S.L."/>
            <person name="Tang S."/>
            <person name="Taylor M.S."/>
            <person name="Tegner J."/>
            <person name="Teichmann S.A."/>
            <person name="Ueda H.R."/>
            <person name="van Nimwegen E."/>
            <person name="Verardo R."/>
            <person name="Wei C.L."/>
            <person name="Yagi K."/>
            <person name="Yamanishi H."/>
            <person name="Zabarovsky E."/>
            <person name="Zhu S."/>
            <person name="Zimmer A."/>
            <person name="Hide W."/>
            <person name="Bult C."/>
            <person name="Grimmond S.M."/>
            <person name="Teasdale R.D."/>
            <person name="Liu E.T."/>
            <person name="Brusic V."/>
            <person name="Quackenbush J."/>
            <person name="Wahlestedt C."/>
            <person name="Mattick J.S."/>
            <person name="Hume D.A."/>
            <person name="Kai C."/>
            <person name="Sasaki D."/>
            <person name="Tomaru Y."/>
            <person name="Fukuda S."/>
            <person name="Kanamori-Katayama M."/>
            <person name="Suzuki M."/>
            <person name="Aoki J."/>
            <person name="Arakawa T."/>
            <person name="Iida J."/>
            <person name="Imamura K."/>
            <person name="Itoh M."/>
            <person name="Kato T."/>
            <person name="Kawaji H."/>
            <person name="Kawagashira N."/>
            <person name="Kawashima T."/>
            <person name="Kojima M."/>
            <person name="Kondo S."/>
            <person name="Konno H."/>
            <person name="Nakano K."/>
            <person name="Ninomiya N."/>
            <person name="Nishio T."/>
            <person name="Okada M."/>
            <person name="Plessy C."/>
            <person name="Shibata K."/>
            <person name="Shiraki T."/>
            <person name="Suzuki S."/>
            <person name="Tagami M."/>
            <person name="Waki K."/>
            <person name="Watahiki A."/>
            <person name="Okamura-Oho Y."/>
            <person name="Suzuki H."/>
            <person name="Kawai J."/>
            <person name="Hayashizaki Y."/>
        </authorList>
    </citation>
    <scope>NUCLEOTIDE SEQUENCE [LARGE SCALE MRNA]</scope>
    <source>
        <strain>C57BL/6J</strain>
        <tissue>Bone marrow</tissue>
        <tissue>Stomach</tissue>
    </source>
</reference>
<reference key="2">
    <citation type="journal article" date="2004" name="Genome Res.">
        <title>The status, quality, and expansion of the NIH full-length cDNA project: the Mammalian Gene Collection (MGC).</title>
        <authorList>
            <consortium name="The MGC Project Team"/>
        </authorList>
    </citation>
    <scope>NUCLEOTIDE SEQUENCE [LARGE SCALE MRNA]</scope>
</reference>
<reference key="3">
    <citation type="submission" date="2007-03" db="UniProtKB">
        <authorList>
            <person name="Lubec G."/>
            <person name="Kang S.U."/>
            <person name="Klug S."/>
        </authorList>
    </citation>
    <scope>PROTEIN SEQUENCE OF 107-117; 119-136; 148-157; 161-186; 191-203 AND 238-248</scope>
    <scope>IDENTIFICATION BY MASS SPECTROMETRY</scope>
    <source>
        <strain>C57BL/6J</strain>
        <tissue>Brain</tissue>
        <tissue>Hippocampus</tissue>
    </source>
</reference>
<reference key="4">
    <citation type="journal article" date="2010" name="Cell">
        <title>A tissue-specific atlas of mouse protein phosphorylation and expression.</title>
        <authorList>
            <person name="Huttlin E.L."/>
            <person name="Jedrychowski M.P."/>
            <person name="Elias J.E."/>
            <person name="Goswami T."/>
            <person name="Rad R."/>
            <person name="Beausoleil S.A."/>
            <person name="Villen J."/>
            <person name="Haas W."/>
            <person name="Sowa M.E."/>
            <person name="Gygi S.P."/>
        </authorList>
    </citation>
    <scope>IDENTIFICATION BY MASS SPECTROMETRY [LARGE SCALE ANALYSIS]</scope>
    <source>
        <tissue>Brain</tissue>
        <tissue>Brown adipose tissue</tissue>
        <tissue>Heart</tissue>
        <tissue>Kidney</tissue>
        <tissue>Liver</tissue>
        <tissue>Lung</tissue>
        <tissue>Pancreas</tissue>
        <tissue>Spleen</tissue>
        <tissue>Testis</tissue>
    </source>
</reference>
<reference key="5">
    <citation type="journal article" date="2013" name="Nature">
        <title>SHANK3 overexpression causes manic-like behaviour with unique pharmacogenetic properties.</title>
        <authorList>
            <person name="Han K."/>
            <person name="Holder J.L. Jr."/>
            <person name="Schaaf C.P."/>
            <person name="Lu H."/>
            <person name="Chen H."/>
            <person name="Kang H."/>
            <person name="Tang J."/>
            <person name="Wu Z."/>
            <person name="Hao S."/>
            <person name="Cheung S.W."/>
            <person name="Yu P."/>
            <person name="Sun H."/>
            <person name="Breman A.M."/>
            <person name="Patel A."/>
            <person name="Lu H.C."/>
            <person name="Zoghbi H.Y."/>
        </authorList>
    </citation>
    <scope>INTERACTION WITH SHANK3</scope>
    <scope>SUBCELLULAR LOCATION</scope>
    <scope>TISSUE SPECIFICITY</scope>
</reference>
<dbReference type="EMBL" id="AK008777">
    <property type="protein sequence ID" value="BAB25889.2"/>
    <property type="molecule type" value="mRNA"/>
</dbReference>
<dbReference type="EMBL" id="AK152356">
    <property type="protein sequence ID" value="BAE31148.1"/>
    <property type="molecule type" value="mRNA"/>
</dbReference>
<dbReference type="EMBL" id="BC115750">
    <property type="protein sequence ID" value="AAI15751.1"/>
    <property type="molecule type" value="mRNA"/>
</dbReference>
<dbReference type="CCDS" id="CCDS35612.1"/>
<dbReference type="RefSeq" id="NP_001344316.1">
    <property type="nucleotide sequence ID" value="NM_001357387.2"/>
</dbReference>
<dbReference type="RefSeq" id="NP_001418874.1">
    <property type="nucleotide sequence ID" value="NM_001431945.2"/>
</dbReference>
<dbReference type="RefSeq" id="NP_083987.1">
    <property type="nucleotide sequence ID" value="NM_029711.3"/>
</dbReference>
<dbReference type="RefSeq" id="XP_006496380.1">
    <property type="nucleotide sequence ID" value="XM_006496317.2"/>
</dbReference>
<dbReference type="PDB" id="7AQK">
    <property type="method" value="EM"/>
    <property type="resolution" value="9.00 A"/>
    <property type="chains" value="d=1-300"/>
</dbReference>
<dbReference type="PDBsum" id="7AQK"/>
<dbReference type="EMDB" id="EMD-11869"/>
<dbReference type="SMR" id="Q9CVB6"/>
<dbReference type="BioGRID" id="218272">
    <property type="interactions" value="30"/>
</dbReference>
<dbReference type="FunCoup" id="Q9CVB6">
    <property type="interactions" value="2246"/>
</dbReference>
<dbReference type="IntAct" id="Q9CVB6">
    <property type="interactions" value="7"/>
</dbReference>
<dbReference type="MINT" id="Q9CVB6"/>
<dbReference type="STRING" id="10090.ENSMUSP00000109451"/>
<dbReference type="GlyGen" id="Q9CVB6">
    <property type="glycosylation" value="1 site, 1 O-linked glycan (1 site)"/>
</dbReference>
<dbReference type="iPTMnet" id="Q9CVB6"/>
<dbReference type="MetOSite" id="Q9CVB6"/>
<dbReference type="PhosphoSitePlus" id="Q9CVB6"/>
<dbReference type="SwissPalm" id="Q9CVB6"/>
<dbReference type="jPOST" id="Q9CVB6"/>
<dbReference type="PaxDb" id="10090-ENSMUSP00000006467"/>
<dbReference type="PeptideAtlas" id="Q9CVB6"/>
<dbReference type="ProteomicsDB" id="281803"/>
<dbReference type="Pumba" id="Q9CVB6"/>
<dbReference type="Antibodypedia" id="1901">
    <property type="antibodies" value="368 antibodies from 37 providers"/>
</dbReference>
<dbReference type="DNASU" id="76709"/>
<dbReference type="Ensembl" id="ENSMUST00000006467.14">
    <property type="protein sequence ID" value="ENSMUSP00000006467.8"/>
    <property type="gene ID" value="ENSMUSG00000006304.15"/>
</dbReference>
<dbReference type="Ensembl" id="ENSMUST00000113820.9">
    <property type="protein sequence ID" value="ENSMUSP00000109451.3"/>
    <property type="gene ID" value="ENSMUSG00000006304.15"/>
</dbReference>
<dbReference type="GeneID" id="76709"/>
<dbReference type="KEGG" id="mmu:76709"/>
<dbReference type="UCSC" id="uc007bln.1">
    <property type="organism name" value="mouse"/>
</dbReference>
<dbReference type="AGR" id="MGI:1923959"/>
<dbReference type="CTD" id="10109"/>
<dbReference type="MGI" id="MGI:1923959">
    <property type="gene designation" value="Arpc2"/>
</dbReference>
<dbReference type="VEuPathDB" id="HostDB:ENSMUSG00000006304"/>
<dbReference type="eggNOG" id="KOG2826">
    <property type="taxonomic scope" value="Eukaryota"/>
</dbReference>
<dbReference type="GeneTree" id="ENSGT00390000016794"/>
<dbReference type="HOGENOM" id="CLU_059439_2_0_1"/>
<dbReference type="InParanoid" id="Q9CVB6"/>
<dbReference type="OMA" id="FRSYFHY"/>
<dbReference type="OrthoDB" id="148331at2759"/>
<dbReference type="PhylomeDB" id="Q9CVB6"/>
<dbReference type="TreeFam" id="TF315006"/>
<dbReference type="Reactome" id="R-MMU-2029482">
    <property type="pathway name" value="Regulation of actin dynamics for phagocytic cup formation"/>
</dbReference>
<dbReference type="Reactome" id="R-MMU-3928662">
    <property type="pathway name" value="EPHB-mediated forward signaling"/>
</dbReference>
<dbReference type="Reactome" id="R-MMU-5663213">
    <property type="pathway name" value="RHO GTPases Activate WASPs and WAVEs"/>
</dbReference>
<dbReference type="Reactome" id="R-MMU-8856828">
    <property type="pathway name" value="Clathrin-mediated endocytosis"/>
</dbReference>
<dbReference type="BioGRID-ORCS" id="76709">
    <property type="hits" value="21 hits in 78 CRISPR screens"/>
</dbReference>
<dbReference type="CD-CODE" id="CE726F99">
    <property type="entry name" value="Postsynaptic density"/>
</dbReference>
<dbReference type="ChiTaRS" id="Arpc2">
    <property type="organism name" value="mouse"/>
</dbReference>
<dbReference type="PRO" id="PR:Q9CVB6"/>
<dbReference type="Proteomes" id="UP000000589">
    <property type="component" value="Chromosome 1"/>
</dbReference>
<dbReference type="RNAct" id="Q9CVB6">
    <property type="molecule type" value="protein"/>
</dbReference>
<dbReference type="Bgee" id="ENSMUSG00000006304">
    <property type="expression patterns" value="Expressed in saccule of membranous labyrinth and 265 other cell types or tissues"/>
</dbReference>
<dbReference type="ExpressionAtlas" id="Q9CVB6">
    <property type="expression patterns" value="baseline and differential"/>
</dbReference>
<dbReference type="GO" id="GO:0005885">
    <property type="term" value="C:Arp2/3 protein complex"/>
    <property type="evidence" value="ECO:0000250"/>
    <property type="project" value="UniProtKB"/>
</dbReference>
<dbReference type="GO" id="GO:0031252">
    <property type="term" value="C:cell leading edge"/>
    <property type="evidence" value="ECO:0000314"/>
    <property type="project" value="MGI"/>
</dbReference>
<dbReference type="GO" id="GO:0005768">
    <property type="term" value="C:endosome"/>
    <property type="evidence" value="ECO:0000314"/>
    <property type="project" value="MGI"/>
</dbReference>
<dbReference type="GO" id="GO:0005925">
    <property type="term" value="C:focal adhesion"/>
    <property type="evidence" value="ECO:0000314"/>
    <property type="project" value="MGI"/>
</dbReference>
<dbReference type="GO" id="GO:0098978">
    <property type="term" value="C:glutamatergic synapse"/>
    <property type="evidence" value="ECO:0000314"/>
    <property type="project" value="SynGO"/>
</dbReference>
<dbReference type="GO" id="GO:0030027">
    <property type="term" value="C:lamellipodium"/>
    <property type="evidence" value="ECO:0007669"/>
    <property type="project" value="Ensembl"/>
</dbReference>
<dbReference type="GO" id="GO:0036195">
    <property type="term" value="C:muscle cell projection membrane"/>
    <property type="evidence" value="ECO:0000314"/>
    <property type="project" value="MGI"/>
</dbReference>
<dbReference type="GO" id="GO:0043005">
    <property type="term" value="C:neuron projection"/>
    <property type="evidence" value="ECO:0007669"/>
    <property type="project" value="UniProtKB-KW"/>
</dbReference>
<dbReference type="GO" id="GO:0005654">
    <property type="term" value="C:nucleoplasm"/>
    <property type="evidence" value="ECO:0007669"/>
    <property type="project" value="Ensembl"/>
</dbReference>
<dbReference type="GO" id="GO:0005634">
    <property type="term" value="C:nucleus"/>
    <property type="evidence" value="ECO:0000250"/>
    <property type="project" value="UniProtKB"/>
</dbReference>
<dbReference type="GO" id="GO:0005886">
    <property type="term" value="C:plasma membrane"/>
    <property type="evidence" value="ECO:0000314"/>
    <property type="project" value="MGI"/>
</dbReference>
<dbReference type="GO" id="GO:0098794">
    <property type="term" value="C:postsynapse"/>
    <property type="evidence" value="ECO:0000314"/>
    <property type="project" value="SynGO"/>
</dbReference>
<dbReference type="GO" id="GO:0098793">
    <property type="term" value="C:presynapse"/>
    <property type="evidence" value="ECO:0000314"/>
    <property type="project" value="SynGO"/>
</dbReference>
<dbReference type="GO" id="GO:0035861">
    <property type="term" value="C:site of double-strand break"/>
    <property type="evidence" value="ECO:0000250"/>
    <property type="project" value="UniProtKB"/>
</dbReference>
<dbReference type="GO" id="GO:0045202">
    <property type="term" value="C:synapse"/>
    <property type="evidence" value="ECO:0000314"/>
    <property type="project" value="SynGO"/>
</dbReference>
<dbReference type="GO" id="GO:0030672">
    <property type="term" value="C:synaptic vesicle membrane"/>
    <property type="evidence" value="ECO:0000314"/>
    <property type="project" value="SynGO"/>
</dbReference>
<dbReference type="GO" id="GO:0051015">
    <property type="term" value="F:actin filament binding"/>
    <property type="evidence" value="ECO:0007669"/>
    <property type="project" value="Ensembl"/>
</dbReference>
<dbReference type="GO" id="GO:0005200">
    <property type="term" value="F:structural constituent of cytoskeleton"/>
    <property type="evidence" value="ECO:0007669"/>
    <property type="project" value="Ensembl"/>
</dbReference>
<dbReference type="GO" id="GO:0030041">
    <property type="term" value="P:actin filament polymerization"/>
    <property type="evidence" value="ECO:0007669"/>
    <property type="project" value="InterPro"/>
</dbReference>
<dbReference type="GO" id="GO:0034314">
    <property type="term" value="P:Arp2/3 complex-mediated actin nucleation"/>
    <property type="evidence" value="ECO:0007669"/>
    <property type="project" value="Ensembl"/>
</dbReference>
<dbReference type="GO" id="GO:0030838">
    <property type="term" value="P:positive regulation of actin filament polymerization"/>
    <property type="evidence" value="ECO:0000314"/>
    <property type="project" value="MGI"/>
</dbReference>
<dbReference type="GO" id="GO:0010592">
    <property type="term" value="P:positive regulation of lamellipodium assembly"/>
    <property type="evidence" value="ECO:0007669"/>
    <property type="project" value="Ensembl"/>
</dbReference>
<dbReference type="GO" id="GO:1900026">
    <property type="term" value="P:positive regulation of substrate adhesion-dependent cell spreading"/>
    <property type="evidence" value="ECO:0000315"/>
    <property type="project" value="MGI"/>
</dbReference>
<dbReference type="FunFam" id="3.30.1460.20:FF:000002">
    <property type="entry name" value="Arp2/3 complex 34 kDa subunit"/>
    <property type="match status" value="1"/>
</dbReference>
<dbReference type="FunFam" id="3.30.1460.20:FF:000004">
    <property type="entry name" value="Arp2/3 complex 34 kDa subunit"/>
    <property type="match status" value="1"/>
</dbReference>
<dbReference type="Gene3D" id="3.30.1460.20">
    <property type="match status" value="2"/>
</dbReference>
<dbReference type="InterPro" id="IPR007188">
    <property type="entry name" value="ARPC2"/>
</dbReference>
<dbReference type="InterPro" id="IPR034666">
    <property type="entry name" value="ARPC2/4"/>
</dbReference>
<dbReference type="PANTHER" id="PTHR12058:SF0">
    <property type="entry name" value="ACTIN-RELATED PROTEIN 2_3 COMPLEX SUBUNIT 2"/>
    <property type="match status" value="1"/>
</dbReference>
<dbReference type="PANTHER" id="PTHR12058">
    <property type="entry name" value="ARP2/3 COMPLEX 34 KDA SUBUNIT"/>
    <property type="match status" value="1"/>
</dbReference>
<dbReference type="Pfam" id="PF04045">
    <property type="entry name" value="P34-Arc"/>
    <property type="match status" value="1"/>
</dbReference>
<dbReference type="SUPFAM" id="SSF69645">
    <property type="entry name" value="Arp2/3 complex subunits"/>
    <property type="match status" value="2"/>
</dbReference>
<evidence type="ECO:0000250" key="1">
    <source>
        <dbReference type="UniProtKB" id="O15144"/>
    </source>
</evidence>
<evidence type="ECO:0000250" key="2">
    <source>
        <dbReference type="UniProtKB" id="P61160"/>
    </source>
</evidence>
<evidence type="ECO:0000269" key="3">
    <source>
    </source>
</evidence>
<evidence type="ECO:0000305" key="4"/>
<protein>
    <recommendedName>
        <fullName>Actin-related protein 2/3 complex subunit 2</fullName>
    </recommendedName>
    <alternativeName>
        <fullName>Arp2/3 complex 34 kDa subunit</fullName>
        <shortName>p34-ARC</shortName>
    </alternativeName>
</protein>
<feature type="chain" id="PRO_0000124034" description="Actin-related protein 2/3 complex subunit 2">
    <location>
        <begin position="1"/>
        <end position="300"/>
    </location>
</feature>
<feature type="modified residue" description="N6-acetyllysine" evidence="1">
    <location>
        <position position="275"/>
    </location>
</feature>
<feature type="modified residue" description="N6-acetyllysine" evidence="1">
    <location>
        <position position="295"/>
    </location>
</feature>
<name>ARPC2_MOUSE</name>
<accession>Q9CVB6</accession>
<accession>Q3U870</accession>